<gene>
    <name evidence="1" type="primary">glk</name>
    <name type="ordered locus">CC_2054</name>
</gene>
<keyword id="KW-0067">ATP-binding</keyword>
<keyword id="KW-0963">Cytoplasm</keyword>
<keyword id="KW-0324">Glycolysis</keyword>
<keyword id="KW-0418">Kinase</keyword>
<keyword id="KW-0547">Nucleotide-binding</keyword>
<keyword id="KW-1185">Reference proteome</keyword>
<keyword id="KW-0808">Transferase</keyword>
<proteinExistence type="inferred from homology"/>
<organism>
    <name type="scientific">Caulobacter vibrioides (strain ATCC 19089 / CIP 103742 / CB 15)</name>
    <name type="common">Caulobacter crescentus</name>
    <dbReference type="NCBI Taxonomy" id="190650"/>
    <lineage>
        <taxon>Bacteria</taxon>
        <taxon>Pseudomonadati</taxon>
        <taxon>Pseudomonadota</taxon>
        <taxon>Alphaproteobacteria</taxon>
        <taxon>Caulobacterales</taxon>
        <taxon>Caulobacteraceae</taxon>
        <taxon>Caulobacter</taxon>
    </lineage>
</organism>
<comment type="catalytic activity">
    <reaction evidence="1">
        <text>D-glucose + ATP = D-glucose 6-phosphate + ADP + H(+)</text>
        <dbReference type="Rhea" id="RHEA:17825"/>
        <dbReference type="ChEBI" id="CHEBI:4167"/>
        <dbReference type="ChEBI" id="CHEBI:15378"/>
        <dbReference type="ChEBI" id="CHEBI:30616"/>
        <dbReference type="ChEBI" id="CHEBI:61548"/>
        <dbReference type="ChEBI" id="CHEBI:456216"/>
        <dbReference type="EC" id="2.7.1.2"/>
    </reaction>
</comment>
<comment type="subcellular location">
    <subcellularLocation>
        <location evidence="1">Cytoplasm</location>
    </subcellularLocation>
</comment>
<comment type="similarity">
    <text evidence="1">Belongs to the bacterial glucokinase family.</text>
</comment>
<accession>Q9A6N3</accession>
<reference key="1">
    <citation type="journal article" date="2001" name="Proc. Natl. Acad. Sci. U.S.A.">
        <title>Complete genome sequence of Caulobacter crescentus.</title>
        <authorList>
            <person name="Nierman W.C."/>
            <person name="Feldblyum T.V."/>
            <person name="Laub M.T."/>
            <person name="Paulsen I.T."/>
            <person name="Nelson K.E."/>
            <person name="Eisen J.A."/>
            <person name="Heidelberg J.F."/>
            <person name="Alley M.R.K."/>
            <person name="Ohta N."/>
            <person name="Maddock J.R."/>
            <person name="Potocka I."/>
            <person name="Nelson W.C."/>
            <person name="Newton A."/>
            <person name="Stephens C."/>
            <person name="Phadke N.D."/>
            <person name="Ely B."/>
            <person name="DeBoy R.T."/>
            <person name="Dodson R.J."/>
            <person name="Durkin A.S."/>
            <person name="Gwinn M.L."/>
            <person name="Haft D.H."/>
            <person name="Kolonay J.F."/>
            <person name="Smit J."/>
            <person name="Craven M.B."/>
            <person name="Khouri H.M."/>
            <person name="Shetty J."/>
            <person name="Berry K.J."/>
            <person name="Utterback T.R."/>
            <person name="Tran K."/>
            <person name="Wolf A.M."/>
            <person name="Vamathevan J.J."/>
            <person name="Ermolaeva M.D."/>
            <person name="White O."/>
            <person name="Salzberg S.L."/>
            <person name="Venter J.C."/>
            <person name="Shapiro L."/>
            <person name="Fraser C.M."/>
        </authorList>
    </citation>
    <scope>NUCLEOTIDE SEQUENCE [LARGE SCALE GENOMIC DNA]</scope>
    <source>
        <strain>ATCC 19089 / CIP 103742 / CB 15</strain>
    </source>
</reference>
<sequence>MDGNHSGGLGLVGDIGGTNARFALVEFDGQDPRLIEPTAYRGEDYGTAEDAIEEYLRKVGVKHPDQAVVAVAGPIDHGQVHMTNLDWRISEDGLRRAGGFRNAKLINDFTAQALAAPRVGPKDLRQIGELPTSGEGDLAILGPGTGFGVAGLVRRHGQEIPLATEGGHVAFAPVDDVEIEVLRALTRRLDGGRVSVERILSGPGMEDLHVDLAAAEGRGVEALTAKQITERAVEGCADSLATVNRFCAILGSTAGDIALTLGARGGVFIAGGIAPRIIDILEKSPFRERFDSKGRLSGFTRSIPTHVILHPHTALIGAAVALTPEGRAAVS</sequence>
<feature type="chain" id="PRO_0000215123" description="Glucokinase">
    <location>
        <begin position="1"/>
        <end position="331"/>
    </location>
</feature>
<feature type="binding site" evidence="1">
    <location>
        <begin position="13"/>
        <end position="18"/>
    </location>
    <ligand>
        <name>ATP</name>
        <dbReference type="ChEBI" id="CHEBI:30616"/>
    </ligand>
</feature>
<name>GLK_CAUVC</name>
<protein>
    <recommendedName>
        <fullName evidence="1">Glucokinase</fullName>
        <ecNumber evidence="1">2.7.1.2</ecNumber>
    </recommendedName>
    <alternativeName>
        <fullName evidence="1">Glucose kinase</fullName>
    </alternativeName>
</protein>
<dbReference type="EC" id="2.7.1.2" evidence="1"/>
<dbReference type="EMBL" id="AE005673">
    <property type="protein sequence ID" value="AAK24027.1"/>
    <property type="molecule type" value="Genomic_DNA"/>
</dbReference>
<dbReference type="PIR" id="G87503">
    <property type="entry name" value="G87503"/>
</dbReference>
<dbReference type="RefSeq" id="NP_420859.1">
    <property type="nucleotide sequence ID" value="NC_002696.2"/>
</dbReference>
<dbReference type="RefSeq" id="WP_010919917.1">
    <property type="nucleotide sequence ID" value="NC_002696.2"/>
</dbReference>
<dbReference type="SMR" id="Q9A6N3"/>
<dbReference type="STRING" id="190650.CC_2054"/>
<dbReference type="EnsemblBacteria" id="AAK24027">
    <property type="protein sequence ID" value="AAK24027"/>
    <property type="gene ID" value="CC_2054"/>
</dbReference>
<dbReference type="KEGG" id="ccr:CC_2054"/>
<dbReference type="PATRIC" id="fig|190650.5.peg.2073"/>
<dbReference type="eggNOG" id="COG0837">
    <property type="taxonomic scope" value="Bacteria"/>
</dbReference>
<dbReference type="HOGENOM" id="CLU_042582_1_0_5"/>
<dbReference type="BioCyc" id="CAULO:CC2054-MONOMER"/>
<dbReference type="Proteomes" id="UP000001816">
    <property type="component" value="Chromosome"/>
</dbReference>
<dbReference type="GO" id="GO:0005829">
    <property type="term" value="C:cytosol"/>
    <property type="evidence" value="ECO:0007669"/>
    <property type="project" value="TreeGrafter"/>
</dbReference>
<dbReference type="GO" id="GO:0005524">
    <property type="term" value="F:ATP binding"/>
    <property type="evidence" value="ECO:0007669"/>
    <property type="project" value="UniProtKB-UniRule"/>
</dbReference>
<dbReference type="GO" id="GO:0005536">
    <property type="term" value="F:D-glucose binding"/>
    <property type="evidence" value="ECO:0007669"/>
    <property type="project" value="InterPro"/>
</dbReference>
<dbReference type="GO" id="GO:0004340">
    <property type="term" value="F:glucokinase activity"/>
    <property type="evidence" value="ECO:0007669"/>
    <property type="project" value="UniProtKB-UniRule"/>
</dbReference>
<dbReference type="GO" id="GO:0006096">
    <property type="term" value="P:glycolytic process"/>
    <property type="evidence" value="ECO:0007669"/>
    <property type="project" value="UniProtKB-UniRule"/>
</dbReference>
<dbReference type="CDD" id="cd24008">
    <property type="entry name" value="ASKHA_NBD_GLK"/>
    <property type="match status" value="1"/>
</dbReference>
<dbReference type="Gene3D" id="3.30.420.40">
    <property type="match status" value="1"/>
</dbReference>
<dbReference type="Gene3D" id="3.40.367.20">
    <property type="match status" value="1"/>
</dbReference>
<dbReference type="HAMAP" id="MF_00524">
    <property type="entry name" value="Glucokinase"/>
    <property type="match status" value="1"/>
</dbReference>
<dbReference type="InterPro" id="IPR043129">
    <property type="entry name" value="ATPase_NBD"/>
</dbReference>
<dbReference type="InterPro" id="IPR050201">
    <property type="entry name" value="Bacterial_glucokinase"/>
</dbReference>
<dbReference type="InterPro" id="IPR003836">
    <property type="entry name" value="Glucokinase"/>
</dbReference>
<dbReference type="NCBIfam" id="TIGR00749">
    <property type="entry name" value="glk"/>
    <property type="match status" value="1"/>
</dbReference>
<dbReference type="PANTHER" id="PTHR47690">
    <property type="entry name" value="GLUCOKINASE"/>
    <property type="match status" value="1"/>
</dbReference>
<dbReference type="PANTHER" id="PTHR47690:SF1">
    <property type="entry name" value="GLUCOKINASE"/>
    <property type="match status" value="1"/>
</dbReference>
<dbReference type="Pfam" id="PF02685">
    <property type="entry name" value="Glucokinase"/>
    <property type="match status" value="1"/>
</dbReference>
<dbReference type="SUPFAM" id="SSF53067">
    <property type="entry name" value="Actin-like ATPase domain"/>
    <property type="match status" value="1"/>
</dbReference>
<evidence type="ECO:0000255" key="1">
    <source>
        <dbReference type="HAMAP-Rule" id="MF_00524"/>
    </source>
</evidence>